<comment type="function">
    <text evidence="1">Core subunit of the mitochondrial membrane respiratory chain NADH dehydrogenase (Complex I) which catalyzes electron transfer from NADH through the respiratory chain, using ubiquinone as an electron acceptor. Essential for the catalytic activity and assembly of complex I.</text>
</comment>
<comment type="catalytic activity">
    <reaction evidence="1">
        <text>a ubiquinone + NADH + 5 H(+)(in) = a ubiquinol + NAD(+) + 4 H(+)(out)</text>
        <dbReference type="Rhea" id="RHEA:29091"/>
        <dbReference type="Rhea" id="RHEA-COMP:9565"/>
        <dbReference type="Rhea" id="RHEA-COMP:9566"/>
        <dbReference type="ChEBI" id="CHEBI:15378"/>
        <dbReference type="ChEBI" id="CHEBI:16389"/>
        <dbReference type="ChEBI" id="CHEBI:17976"/>
        <dbReference type="ChEBI" id="CHEBI:57540"/>
        <dbReference type="ChEBI" id="CHEBI:57945"/>
        <dbReference type="EC" id="7.1.1.2"/>
    </reaction>
</comment>
<comment type="subunit">
    <text evidence="2">Core subunit of respiratory chain NADH dehydrogenase (Complex I) which is composed of 45 different subunits.</text>
</comment>
<comment type="subcellular location">
    <subcellularLocation>
        <location evidence="2">Mitochondrion inner membrane</location>
        <topology evidence="3">Multi-pass membrane protein</topology>
    </subcellularLocation>
</comment>
<comment type="similarity">
    <text evidence="5">Belongs to the complex I subunit 1 family.</text>
</comment>
<accession>Q9T9X9</accession>
<accession>P92718</accession>
<accession>P92724</accession>
<organism>
    <name type="scientific">Pongo pygmaeus</name>
    <name type="common">Bornean orangutan</name>
    <dbReference type="NCBI Taxonomy" id="9600"/>
    <lineage>
        <taxon>Eukaryota</taxon>
        <taxon>Metazoa</taxon>
        <taxon>Chordata</taxon>
        <taxon>Craniata</taxon>
        <taxon>Vertebrata</taxon>
        <taxon>Euteleostomi</taxon>
        <taxon>Mammalia</taxon>
        <taxon>Eutheria</taxon>
        <taxon>Euarchontoglires</taxon>
        <taxon>Primates</taxon>
        <taxon>Haplorrhini</taxon>
        <taxon>Catarrhini</taxon>
        <taxon>Hominidae</taxon>
        <taxon>Pongo</taxon>
    </lineage>
</organism>
<geneLocation type="mitochondrion"/>
<proteinExistence type="inferred from homology"/>
<feature type="chain" id="PRO_0000117463" description="NADH-ubiquinone oxidoreductase chain 1">
    <location>
        <begin position="1"/>
        <end position="318"/>
    </location>
</feature>
<feature type="transmembrane region" description="Helical" evidence="3">
    <location>
        <begin position="2"/>
        <end position="22"/>
    </location>
</feature>
<feature type="transmembrane region" description="Helical" evidence="3">
    <location>
        <begin position="69"/>
        <end position="89"/>
    </location>
</feature>
<feature type="transmembrane region" description="Helical" evidence="3">
    <location>
        <begin position="100"/>
        <end position="120"/>
    </location>
</feature>
<feature type="transmembrane region" description="Helical" evidence="3">
    <location>
        <begin position="146"/>
        <end position="166"/>
    </location>
</feature>
<feature type="transmembrane region" description="Helical" evidence="3">
    <location>
        <begin position="171"/>
        <end position="191"/>
    </location>
</feature>
<feature type="transmembrane region" description="Helical" evidence="3">
    <location>
        <begin position="222"/>
        <end position="242"/>
    </location>
</feature>
<feature type="transmembrane region" description="Helical" evidence="3">
    <location>
        <begin position="253"/>
        <end position="273"/>
    </location>
</feature>
<feature type="transmembrane region" description="Helical" evidence="3">
    <location>
        <begin position="294"/>
        <end position="314"/>
    </location>
</feature>
<feature type="sequence variant" id="VAR_019555" description="In strain: Isolate Anna." evidence="4">
    <original>T</original>
    <variation>I</variation>
    <location>
        <position position="68"/>
    </location>
</feature>
<feature type="sequence conflict" description="In Ref. 1; BAA85285." evidence="5" ref="1">
    <original>T</original>
    <variation>P</variation>
    <location>
        <position position="168"/>
    </location>
</feature>
<feature type="sequence conflict" description="In Ref. 1; BAA85285." evidence="5" ref="1">
    <original>H</original>
    <variation>N</variation>
    <location>
        <position position="171"/>
    </location>
</feature>
<feature type="sequence conflict" description="In Ref. 1; BAA85285." evidence="5" ref="1">
    <original>S</original>
    <variation>Q</variation>
    <location>
        <position position="275"/>
    </location>
</feature>
<keyword id="KW-0249">Electron transport</keyword>
<keyword id="KW-0472">Membrane</keyword>
<keyword id="KW-0496">Mitochondrion</keyword>
<keyword id="KW-0999">Mitochondrion inner membrane</keyword>
<keyword id="KW-0520">NAD</keyword>
<keyword id="KW-0679">Respiratory chain</keyword>
<keyword id="KW-1278">Translocase</keyword>
<keyword id="KW-0812">Transmembrane</keyword>
<keyword id="KW-1133">Transmembrane helix</keyword>
<keyword id="KW-0813">Transport</keyword>
<keyword id="KW-0830">Ubiquinone</keyword>
<protein>
    <recommendedName>
        <fullName>NADH-ubiquinone oxidoreductase chain 1</fullName>
        <ecNumber evidence="1">7.1.1.2</ecNumber>
    </recommendedName>
    <alternativeName>
        <fullName>NADH dehydrogenase subunit 1</fullName>
    </alternativeName>
</protein>
<dbReference type="EC" id="7.1.1.2" evidence="1"/>
<dbReference type="EMBL" id="D38115">
    <property type="protein sequence ID" value="BAA85285.1"/>
    <property type="molecule type" value="Genomic_DNA"/>
</dbReference>
<dbReference type="EMBL" id="X97718">
    <property type="protein sequence ID" value="CAA66304.1"/>
    <property type="molecule type" value="Genomic_DNA"/>
</dbReference>
<dbReference type="EMBL" id="X97713">
    <property type="protein sequence ID" value="CAA66299.1"/>
    <property type="molecule type" value="Genomic_DNA"/>
</dbReference>
<dbReference type="RefSeq" id="NP_008225.1">
    <property type="nucleotide sequence ID" value="NC_001646.1"/>
</dbReference>
<dbReference type="SMR" id="Q9T9X9"/>
<dbReference type="GeneID" id="807903"/>
<dbReference type="KEGG" id="ppyg:807903"/>
<dbReference type="CTD" id="4535"/>
<dbReference type="GO" id="GO:0005743">
    <property type="term" value="C:mitochondrial inner membrane"/>
    <property type="evidence" value="ECO:0000250"/>
    <property type="project" value="UniProtKB"/>
</dbReference>
<dbReference type="GO" id="GO:0008137">
    <property type="term" value="F:NADH dehydrogenase (ubiquinone) activity"/>
    <property type="evidence" value="ECO:0000250"/>
    <property type="project" value="UniProtKB"/>
</dbReference>
<dbReference type="GO" id="GO:0006120">
    <property type="term" value="P:mitochondrial electron transport, NADH to ubiquinone"/>
    <property type="evidence" value="ECO:0000250"/>
    <property type="project" value="UniProtKB"/>
</dbReference>
<dbReference type="GO" id="GO:0032981">
    <property type="term" value="P:mitochondrial respiratory chain complex I assembly"/>
    <property type="evidence" value="ECO:0000250"/>
    <property type="project" value="UniProtKB"/>
</dbReference>
<dbReference type="HAMAP" id="MF_01350">
    <property type="entry name" value="NDH1_NuoH"/>
    <property type="match status" value="1"/>
</dbReference>
<dbReference type="InterPro" id="IPR001694">
    <property type="entry name" value="NADH_UbQ_OxRdtase_su1/FPO"/>
</dbReference>
<dbReference type="InterPro" id="IPR018086">
    <property type="entry name" value="NADH_UbQ_OxRdtase_su1_CS"/>
</dbReference>
<dbReference type="PANTHER" id="PTHR11432">
    <property type="entry name" value="NADH DEHYDROGENASE SUBUNIT 1"/>
    <property type="match status" value="1"/>
</dbReference>
<dbReference type="PANTHER" id="PTHR11432:SF3">
    <property type="entry name" value="NADH-UBIQUINONE OXIDOREDUCTASE CHAIN 1"/>
    <property type="match status" value="1"/>
</dbReference>
<dbReference type="Pfam" id="PF00146">
    <property type="entry name" value="NADHdh"/>
    <property type="match status" value="1"/>
</dbReference>
<dbReference type="PROSITE" id="PS00667">
    <property type="entry name" value="COMPLEX1_ND1_1"/>
    <property type="match status" value="1"/>
</dbReference>
<dbReference type="PROSITE" id="PS00668">
    <property type="entry name" value="COMPLEX1_ND1_2"/>
    <property type="match status" value="1"/>
</dbReference>
<evidence type="ECO:0000250" key="1">
    <source>
        <dbReference type="UniProtKB" id="P03886"/>
    </source>
</evidence>
<evidence type="ECO:0000250" key="2">
    <source>
        <dbReference type="UniProtKB" id="P03887"/>
    </source>
</evidence>
<evidence type="ECO:0000255" key="3"/>
<evidence type="ECO:0000269" key="4">
    <source>
    </source>
</evidence>
<evidence type="ECO:0000305" key="5"/>
<name>NU1M_PONPY</name>
<sequence>MPVINLLLLTMSILIAMAFLMLTERKILGYTQLRKGPNIVGPCGLLQPFADALKLFTKEPLKPSTSTTILYIVSPALALTIALLLWTPLPMPNPLINLNLGLLFILATSSLTVYSILWSGWASNSNYALIGTLRAVAQTISYEITLALILLSVLLMSGSFNLSTLITTQEHSWLLLPSWPLALMWFISTLAETNRAPFDLTEGESELVSGFNTEYAAGPFALFFMAEYTNIILMNALTAMIFLGTTFNIHSPELHTTLFTIKTLLLTSLFLWIRSTYPRFRYDQLMHLLWKNFLPLTLALLMWHISMPITTSGIPPQT</sequence>
<gene>
    <name type="primary">MT-ND1</name>
    <name type="synonym">MTND1</name>
    <name type="synonym">NADH1</name>
    <name type="synonym">ND1</name>
</gene>
<reference key="1">
    <citation type="journal article" date="1995" name="Proc. Natl. Acad. Sci. U.S.A.">
        <title>Recent African origin of modern humans revealed by complete sequences of hominoid mitochondrial DNAs.</title>
        <authorList>
            <person name="Horai S."/>
            <person name="Hayasaka K."/>
            <person name="Kondo R."/>
            <person name="Tsugane K."/>
            <person name="Takahata N."/>
        </authorList>
    </citation>
    <scope>NUCLEOTIDE SEQUENCE [GENOMIC DNA]</scope>
</reference>
<reference key="2">
    <citation type="journal article" date="1996" name="J. Mol. Evol.">
        <title>The mitochondrial DNA molecule of Sumatran orangutan and a molecular proposal for two (Bornean and Sumatran) species of orangutan.</title>
        <authorList>
            <person name="Xu X."/>
            <person name="Arnason U."/>
        </authorList>
    </citation>
    <scope>NUCLEOTIDE SEQUENCE [GENOMIC DNA]</scope>
    <scope>VARIANT ILE-68</scope>
    <source>
        <strain>Isolate Anna</strain>
        <strain>Isolate Dennis</strain>
    </source>
</reference>